<proteinExistence type="inferred from homology"/>
<name>MACI_PENTR</name>
<feature type="chain" id="PRO_0000454090" description="O-Mevalon transferase macI">
    <location>
        <begin position="1"/>
        <end position="431"/>
    </location>
</feature>
<feature type="transmembrane region" description="Helical" evidence="2">
    <location>
        <begin position="198"/>
        <end position="218"/>
    </location>
</feature>
<feature type="transmembrane region" description="Helical" evidence="2">
    <location>
        <begin position="301"/>
        <end position="321"/>
    </location>
</feature>
<feature type="transmembrane region" description="Helical" evidence="2">
    <location>
        <begin position="336"/>
        <end position="356"/>
    </location>
</feature>
<feature type="transmembrane region" description="Helical" evidence="2">
    <location>
        <begin position="404"/>
        <end position="424"/>
    </location>
</feature>
<feature type="glycosylation site" description="N-linked (GlcNAc...) asparagine" evidence="3">
    <location>
        <position position="176"/>
    </location>
</feature>
<organism>
    <name type="scientific">Penicillium terrestre</name>
    <dbReference type="NCBI Taxonomy" id="374132"/>
    <lineage>
        <taxon>Eukaryota</taxon>
        <taxon>Fungi</taxon>
        <taxon>Dikarya</taxon>
        <taxon>Ascomycota</taxon>
        <taxon>Pezizomycotina</taxon>
        <taxon>Eurotiomycetes</taxon>
        <taxon>Eurotiomycetidae</taxon>
        <taxon>Eurotiales</taxon>
        <taxon>Aspergillaceae</taxon>
        <taxon>Penicillium</taxon>
    </lineage>
</organism>
<protein>
    <recommendedName>
        <fullName evidence="5">O-Mevalon transferase macI</fullName>
        <ecNumber evidence="1">2.-.-.-</ecNumber>
    </recommendedName>
    <alternativeName>
        <fullName evidence="5">Macrophorins biosynthesis cluster protein I</fullName>
    </alternativeName>
</protein>
<sequence length="431" mass="47784">MAEMDVSSWKPTKLETKPFSLDSGHYTALAFVLAVCVPQAPHGTALRYGLLLLQITCGVQAFLAQPPSVPDRAVLYTSGVLMGNLVARYFDRLYTTVPEKTFHRIIDSQTPEDTTQLSAPKRFFWALELFSVTRGIGWNWRVAGIPKSPVPITRFQFAAAQLLRWTVMYAGLHLVNVTCQVVSSNPNAIPSLPGNLHIYALIVCGFAITIYSHFAILMLPLSALCVGLQVGPRSWQAVASWPPNFGSVREAYSIRRFWGYTWHQQLRRQAGAPGAYLISLLPDSVMTSKRTAVKLARRYSLLMMSFVISGLIHACGTYQVTRALGLPLSDGGEMKYFALQGMAIIAEDFGCWVLGIDDRGTQPGVMRRWMGYAITLSWYIWSRVQLKGVPVALAMGIEDERGDLFAALELVRVSAVAVPGNFVAMAWELIW</sequence>
<accession>A0A2P1DP75</accession>
<comment type="function">
    <text evidence="1 4">O-Mevalon transferase; part of the gene cluster that mediates the biosynthesis of macrophorins, isoprenoid epoxycyclohexenones containing cyclized drimane moieties (PubMed:28926261). The first step of the pathway is the synthesis of 6-methylsalicylic acid (6-MSA) by the polyketide synthase macA (PubMed:28926261). 6-MSA is then converted to m-cresol by the decarboxylase macB (By similarity). The cytochrome P450 monooxygenase macC then catalyzes the oxidation of m-cresol to toluquinol (By similarity). Epoxidation of toluquinol is then performed by the short chain dehydrogenase macD, with the help of macE, and a further prenylation by macG leads to 7-deacetoxyyanuthone A (By similarity). The next step is the hydroxylation of C-22 of 7-deacetoxyyanuthone A by the cytochrome P450 monooxygenase macH to yield 22-deacetylyanuthone A (By similarity). O-Mevalon transferase macI then attaches mevalon to the hydroxyl group of 22-deacetylyanuthone A to produce yanuthone E (By similarity). The terpene cyclase macJ catalyzes the cyclization of 22-deacetylyanuthone A to macrophorin A (PubMed:28926261). MacJ is also able to catalyze cyclization of yanuthone E and 7-deacetoxyyanuthone A to their corresponding macrophorins (PubMed:28926261). The macJ products can be further modified by macH and macJ, as well as by the FAD-dependent monooxygenase macF, to produce additional macrophorins, including 4'-oxomacrophorin A, 4'-oxomacrophorin D and 4'-oxomacrophorin E (PubMed:28926261).</text>
</comment>
<comment type="pathway">
    <text evidence="4">Secondary metabolite biosynthesis; terpenoid biosynthesis.</text>
</comment>
<comment type="subcellular location">
    <subcellularLocation>
        <location evidence="2">Membrane</location>
        <topology evidence="2">Multi-pass membrane protein</topology>
    </subcellularLocation>
</comment>
<comment type="miscellaneous">
    <text evidence="4">The macrophorins cluster contains a single gene insertion (encoding for the terpene cyclase macJ) compared with the yanuthone cluster that produces the linear compound yanuthone.</text>
</comment>
<comment type="similarity">
    <text evidence="6">Belongs to the wax synthase family.</text>
</comment>
<evidence type="ECO:0000250" key="1">
    <source>
        <dbReference type="UniProtKB" id="G3Y421"/>
    </source>
</evidence>
<evidence type="ECO:0000255" key="2"/>
<evidence type="ECO:0000255" key="3">
    <source>
        <dbReference type="PROSITE-ProRule" id="PRU00498"/>
    </source>
</evidence>
<evidence type="ECO:0000269" key="4">
    <source>
    </source>
</evidence>
<evidence type="ECO:0000303" key="5">
    <source>
    </source>
</evidence>
<evidence type="ECO:0000305" key="6"/>
<dbReference type="EC" id="2.-.-.-" evidence="1"/>
<dbReference type="EMBL" id="MF990001">
    <property type="protein sequence ID" value="AVK70102.1"/>
    <property type="molecule type" value="Genomic_DNA"/>
</dbReference>
<dbReference type="EMBL" id="MH388470">
    <property type="protein sequence ID" value="QBC75446.1"/>
    <property type="molecule type" value="Genomic_DNA"/>
</dbReference>
<dbReference type="GlyCosmos" id="A0A2P1DP75">
    <property type="glycosylation" value="1 site, No reported glycans"/>
</dbReference>
<dbReference type="UniPathway" id="UPA00213"/>
<dbReference type="GO" id="GO:0016020">
    <property type="term" value="C:membrane"/>
    <property type="evidence" value="ECO:0007669"/>
    <property type="project" value="UniProtKB-SubCell"/>
</dbReference>
<dbReference type="GO" id="GO:0008374">
    <property type="term" value="F:O-acyltransferase activity"/>
    <property type="evidence" value="ECO:0007669"/>
    <property type="project" value="InterPro"/>
</dbReference>
<dbReference type="GO" id="GO:0016114">
    <property type="term" value="P:terpenoid biosynthetic process"/>
    <property type="evidence" value="ECO:0007669"/>
    <property type="project" value="UniProtKB-UniPathway"/>
</dbReference>
<dbReference type="InterPro" id="IPR044851">
    <property type="entry name" value="Wax_synthase"/>
</dbReference>
<dbReference type="InterPro" id="IPR032805">
    <property type="entry name" value="Wax_synthase_dom"/>
</dbReference>
<dbReference type="PANTHER" id="PTHR31595">
    <property type="entry name" value="LONG-CHAIN-ALCOHOL O-FATTY-ACYLTRANSFERASE 3-RELATED"/>
    <property type="match status" value="1"/>
</dbReference>
<dbReference type="PANTHER" id="PTHR31595:SF57">
    <property type="entry name" value="OS04G0481900 PROTEIN"/>
    <property type="match status" value="1"/>
</dbReference>
<dbReference type="Pfam" id="PF13813">
    <property type="entry name" value="MBOAT_2"/>
    <property type="match status" value="1"/>
</dbReference>
<reference key="1">
    <citation type="journal article" date="2017" name="Org. Lett.">
        <title>Late-stage terpene cyclization by an integral membrane cyclase in the biosynthesis of isoprenoid epoxycyclohexenone natural products.</title>
        <authorList>
            <person name="Tang M.C."/>
            <person name="Cui X."/>
            <person name="He X."/>
            <person name="Ding Z."/>
            <person name="Zhu T."/>
            <person name="Tang Y."/>
            <person name="Li D."/>
        </authorList>
    </citation>
    <scope>NUCLEOTIDE SEQUENCE [GENOMIC DNA]</scope>
    <scope>FUNCTION</scope>
    <scope>PATHWAY</scope>
    <source>
        <strain>LM2</strain>
    </source>
</reference>
<gene>
    <name evidence="5" type="primary">macI</name>
</gene>
<keyword id="KW-0325">Glycoprotein</keyword>
<keyword id="KW-0472">Membrane</keyword>
<keyword id="KW-0808">Transferase</keyword>
<keyword id="KW-0812">Transmembrane</keyword>
<keyword id="KW-1133">Transmembrane helix</keyword>